<proteinExistence type="predicted"/>
<protein>
    <recommendedName>
        <fullName>Uncharacterized 16.1 kDa HIT-like protein</fullName>
    </recommendedName>
</protein>
<dbReference type="EMBL" id="U00089">
    <property type="protein sequence ID" value="AAB96210.1"/>
    <property type="molecule type" value="Genomic_DNA"/>
</dbReference>
<dbReference type="PIR" id="S73888">
    <property type="entry name" value="S73888"/>
</dbReference>
<dbReference type="RefSeq" id="NP_109961.1">
    <property type="nucleotide sequence ID" value="NC_000912.1"/>
</dbReference>
<dbReference type="RefSeq" id="WP_010874630.1">
    <property type="nucleotide sequence ID" value="NZ_OU342337.1"/>
</dbReference>
<dbReference type="SMR" id="P75504"/>
<dbReference type="STRING" id="272634.MPN_273"/>
<dbReference type="EnsemblBacteria" id="AAB96210">
    <property type="protein sequence ID" value="AAB96210"/>
    <property type="gene ID" value="MPN_273"/>
</dbReference>
<dbReference type="KEGG" id="mpn:MPN_273"/>
<dbReference type="PATRIC" id="fig|272634.6.peg.293"/>
<dbReference type="HOGENOM" id="CLU_056776_3_2_14"/>
<dbReference type="OrthoDB" id="9784774at2"/>
<dbReference type="BioCyc" id="MPNE272634:G1GJ3-430-MONOMER"/>
<dbReference type="Proteomes" id="UP000000808">
    <property type="component" value="Chromosome"/>
</dbReference>
<dbReference type="GO" id="GO:0003824">
    <property type="term" value="F:catalytic activity"/>
    <property type="evidence" value="ECO:0007669"/>
    <property type="project" value="InterPro"/>
</dbReference>
<dbReference type="GO" id="GO:0009117">
    <property type="term" value="P:nucleotide metabolic process"/>
    <property type="evidence" value="ECO:0007669"/>
    <property type="project" value="TreeGrafter"/>
</dbReference>
<dbReference type="CDD" id="cd01277">
    <property type="entry name" value="HINT_subgroup"/>
    <property type="match status" value="1"/>
</dbReference>
<dbReference type="Gene3D" id="3.30.428.10">
    <property type="entry name" value="HIT-like"/>
    <property type="match status" value="1"/>
</dbReference>
<dbReference type="InterPro" id="IPR039384">
    <property type="entry name" value="HINT"/>
</dbReference>
<dbReference type="InterPro" id="IPR019808">
    <property type="entry name" value="Histidine_triad_CS"/>
</dbReference>
<dbReference type="InterPro" id="IPR001310">
    <property type="entry name" value="Histidine_triad_HIT"/>
</dbReference>
<dbReference type="InterPro" id="IPR011146">
    <property type="entry name" value="HIT-like"/>
</dbReference>
<dbReference type="InterPro" id="IPR036265">
    <property type="entry name" value="HIT-like_sf"/>
</dbReference>
<dbReference type="PANTHER" id="PTHR46648:SF1">
    <property type="entry name" value="ADENOSINE 5'-MONOPHOSPHORAMIDASE HNT1"/>
    <property type="match status" value="1"/>
</dbReference>
<dbReference type="PANTHER" id="PTHR46648">
    <property type="entry name" value="HIT FAMILY PROTEIN 1"/>
    <property type="match status" value="1"/>
</dbReference>
<dbReference type="Pfam" id="PF01230">
    <property type="entry name" value="HIT"/>
    <property type="match status" value="1"/>
</dbReference>
<dbReference type="PRINTS" id="PR00332">
    <property type="entry name" value="HISTRIAD"/>
</dbReference>
<dbReference type="SUPFAM" id="SSF54197">
    <property type="entry name" value="HIT-like"/>
    <property type="match status" value="1"/>
</dbReference>
<dbReference type="PROSITE" id="PS00892">
    <property type="entry name" value="HIT_1"/>
    <property type="match status" value="1"/>
</dbReference>
<dbReference type="PROSITE" id="PS51084">
    <property type="entry name" value="HIT_2"/>
    <property type="match status" value="1"/>
</dbReference>
<evidence type="ECO:0000255" key="1">
    <source>
        <dbReference type="PROSITE-ProRule" id="PRU00464"/>
    </source>
</evidence>
<sequence length="144" mass="16086">MVQKQSMANNNCIFCGIVEGNVKSFKVGENEHAFAFLDAFPVADGHTLVIPKKHAVNYSSTDDESLKAVSLLAKEMALKLQQRLQPAGLNYVVNEGAKAGQEVFHYHMHVVPKYETGLGFCYNVRKTNNRSIEANWELLTKEVD</sequence>
<keyword id="KW-1185">Reference proteome</keyword>
<gene>
    <name type="ordered locus">MPN_273</name>
    <name type="ORF">A65_orf144</name>
    <name type="ORF">MP562</name>
</gene>
<reference key="1">
    <citation type="journal article" date="1996" name="Nucleic Acids Res.">
        <title>Complete sequence analysis of the genome of the bacterium Mycoplasma pneumoniae.</title>
        <authorList>
            <person name="Himmelreich R."/>
            <person name="Hilbert H."/>
            <person name="Plagens H."/>
            <person name="Pirkl E."/>
            <person name="Li B.-C."/>
            <person name="Herrmann R."/>
        </authorList>
    </citation>
    <scope>NUCLEOTIDE SEQUENCE [LARGE SCALE GENOMIC DNA]</scope>
    <source>
        <strain>ATCC 29342 / M129 / Subtype 1</strain>
    </source>
</reference>
<feature type="chain" id="PRO_0000109821" description="Uncharacterized 16.1 kDa HIT-like protein">
    <location>
        <begin position="1"/>
        <end position="144"/>
    </location>
</feature>
<feature type="domain" description="HIT" evidence="1">
    <location>
        <begin position="13"/>
        <end position="120"/>
    </location>
</feature>
<feature type="short sequence motif" description="Histidine triad motif">
    <location>
        <begin position="105"/>
        <end position="109"/>
    </location>
</feature>
<organism>
    <name type="scientific">Mycoplasma pneumoniae (strain ATCC 29342 / M129 / Subtype 1)</name>
    <name type="common">Mycoplasmoides pneumoniae</name>
    <dbReference type="NCBI Taxonomy" id="272634"/>
    <lineage>
        <taxon>Bacteria</taxon>
        <taxon>Bacillati</taxon>
        <taxon>Mycoplasmatota</taxon>
        <taxon>Mycoplasmoidales</taxon>
        <taxon>Mycoplasmoidaceae</taxon>
        <taxon>Mycoplasmoides</taxon>
    </lineage>
</organism>
<accession>P75504</accession>
<name>YHIT_MYCPN</name>